<organism>
    <name type="scientific">Blochmanniella floridana</name>
    <dbReference type="NCBI Taxonomy" id="203907"/>
    <lineage>
        <taxon>Bacteria</taxon>
        <taxon>Pseudomonadati</taxon>
        <taxon>Pseudomonadota</taxon>
        <taxon>Gammaproteobacteria</taxon>
        <taxon>Enterobacterales</taxon>
        <taxon>Enterobacteriaceae</taxon>
        <taxon>ant endosymbionts</taxon>
        <taxon>Candidatus Blochmanniella</taxon>
    </lineage>
</organism>
<gene>
    <name evidence="1" type="primary">ureA</name>
    <name type="ordered locus">Bfl525</name>
</gene>
<name>URE3_BLOFL</name>
<evidence type="ECO:0000255" key="1">
    <source>
        <dbReference type="HAMAP-Rule" id="MF_00739"/>
    </source>
</evidence>
<proteinExistence type="inferred from homology"/>
<feature type="chain" id="PRO_0000098007" description="Urease subunit gamma">
    <location>
        <begin position="1"/>
        <end position="100"/>
    </location>
</feature>
<sequence length="100" mass="11098">MKLLPREIDKLLLFTAALLAERRKKRGLKLNYPEAIALISFVVLEGARDGKNVAELMEIGRNVLSKDDVIPGVSEMISNVQIEATFLDGTKLVTIHDPII</sequence>
<protein>
    <recommendedName>
        <fullName evidence="1">Urease subunit gamma</fullName>
        <ecNumber evidence="1">3.5.1.5</ecNumber>
    </recommendedName>
    <alternativeName>
        <fullName evidence="1">Urea amidohydrolase subunit gamma</fullName>
    </alternativeName>
</protein>
<comment type="catalytic activity">
    <reaction evidence="1">
        <text>urea + 2 H2O + H(+) = hydrogencarbonate + 2 NH4(+)</text>
        <dbReference type="Rhea" id="RHEA:20557"/>
        <dbReference type="ChEBI" id="CHEBI:15377"/>
        <dbReference type="ChEBI" id="CHEBI:15378"/>
        <dbReference type="ChEBI" id="CHEBI:16199"/>
        <dbReference type="ChEBI" id="CHEBI:17544"/>
        <dbReference type="ChEBI" id="CHEBI:28938"/>
        <dbReference type="EC" id="3.5.1.5"/>
    </reaction>
</comment>
<comment type="pathway">
    <text evidence="1">Nitrogen metabolism; urea degradation; CO(2) and NH(3) from urea (urease route): step 1/1.</text>
</comment>
<comment type="subunit">
    <text evidence="1">Heterotrimer of UreA (gamma), UreB (beta) and UreC (alpha) subunits. Three heterotrimers associate to form the active enzyme.</text>
</comment>
<comment type="subcellular location">
    <subcellularLocation>
        <location evidence="1">Cytoplasm</location>
    </subcellularLocation>
</comment>
<comment type="similarity">
    <text evidence="1">Belongs to the urease gamma subunit family.</text>
</comment>
<keyword id="KW-0963">Cytoplasm</keyword>
<keyword id="KW-0378">Hydrolase</keyword>
<keyword id="KW-1185">Reference proteome</keyword>
<accession>Q7VRS4</accession>
<reference key="1">
    <citation type="journal article" date="2003" name="Proc. Natl. Acad. Sci. U.S.A.">
        <title>The genome sequence of Blochmannia floridanus: comparative analysis of reduced genomes.</title>
        <authorList>
            <person name="Gil R."/>
            <person name="Silva F.J."/>
            <person name="Zientz E."/>
            <person name="Delmotte F."/>
            <person name="Gonzalez-Candelas F."/>
            <person name="Latorre A."/>
            <person name="Rausell C."/>
            <person name="Kamerbeek J."/>
            <person name="Gadau J."/>
            <person name="Hoelldobler B."/>
            <person name="van Ham R.C.H.J."/>
            <person name="Gross R."/>
            <person name="Moya A."/>
        </authorList>
    </citation>
    <scope>NUCLEOTIDE SEQUENCE [LARGE SCALE GENOMIC DNA]</scope>
</reference>
<dbReference type="EC" id="3.5.1.5" evidence="1"/>
<dbReference type="EMBL" id="BX248583">
    <property type="protein sequence ID" value="CAD83211.1"/>
    <property type="molecule type" value="Genomic_DNA"/>
</dbReference>
<dbReference type="SMR" id="Q7VRS4"/>
<dbReference type="STRING" id="203907.Bfl525"/>
<dbReference type="KEGG" id="bfl:Bfl525"/>
<dbReference type="eggNOG" id="COG0831">
    <property type="taxonomic scope" value="Bacteria"/>
</dbReference>
<dbReference type="HOGENOM" id="CLU_145825_1_0_6"/>
<dbReference type="OrthoDB" id="9797217at2"/>
<dbReference type="UniPathway" id="UPA00258">
    <property type="reaction ID" value="UER00370"/>
</dbReference>
<dbReference type="Proteomes" id="UP000002192">
    <property type="component" value="Chromosome"/>
</dbReference>
<dbReference type="GO" id="GO:0005737">
    <property type="term" value="C:cytoplasm"/>
    <property type="evidence" value="ECO:0007669"/>
    <property type="project" value="UniProtKB-SubCell"/>
</dbReference>
<dbReference type="GO" id="GO:0016151">
    <property type="term" value="F:nickel cation binding"/>
    <property type="evidence" value="ECO:0007669"/>
    <property type="project" value="InterPro"/>
</dbReference>
<dbReference type="GO" id="GO:0009039">
    <property type="term" value="F:urease activity"/>
    <property type="evidence" value="ECO:0007669"/>
    <property type="project" value="UniProtKB-UniRule"/>
</dbReference>
<dbReference type="GO" id="GO:0043419">
    <property type="term" value="P:urea catabolic process"/>
    <property type="evidence" value="ECO:0007669"/>
    <property type="project" value="UniProtKB-UniRule"/>
</dbReference>
<dbReference type="CDD" id="cd00390">
    <property type="entry name" value="Urease_gamma"/>
    <property type="match status" value="1"/>
</dbReference>
<dbReference type="Gene3D" id="3.30.280.10">
    <property type="entry name" value="Urease, gamma-like subunit"/>
    <property type="match status" value="1"/>
</dbReference>
<dbReference type="HAMAP" id="MF_00739">
    <property type="entry name" value="Urease_gamma"/>
    <property type="match status" value="1"/>
</dbReference>
<dbReference type="InterPro" id="IPR012010">
    <property type="entry name" value="Urease_gamma"/>
</dbReference>
<dbReference type="InterPro" id="IPR002026">
    <property type="entry name" value="Urease_gamma/gamma-beta_su"/>
</dbReference>
<dbReference type="InterPro" id="IPR036463">
    <property type="entry name" value="Urease_gamma_sf"/>
</dbReference>
<dbReference type="InterPro" id="IPR050069">
    <property type="entry name" value="Urease_subunit"/>
</dbReference>
<dbReference type="NCBIfam" id="NF009712">
    <property type="entry name" value="PRK13241.1"/>
    <property type="match status" value="1"/>
</dbReference>
<dbReference type="NCBIfam" id="TIGR00193">
    <property type="entry name" value="urease_gam"/>
    <property type="match status" value="1"/>
</dbReference>
<dbReference type="PANTHER" id="PTHR33569">
    <property type="entry name" value="UREASE"/>
    <property type="match status" value="1"/>
</dbReference>
<dbReference type="PANTHER" id="PTHR33569:SF1">
    <property type="entry name" value="UREASE"/>
    <property type="match status" value="1"/>
</dbReference>
<dbReference type="Pfam" id="PF00547">
    <property type="entry name" value="Urease_gamma"/>
    <property type="match status" value="1"/>
</dbReference>
<dbReference type="PIRSF" id="PIRSF001223">
    <property type="entry name" value="Urease_gamma"/>
    <property type="match status" value="1"/>
</dbReference>
<dbReference type="SUPFAM" id="SSF54111">
    <property type="entry name" value="Urease, gamma-subunit"/>
    <property type="match status" value="1"/>
</dbReference>